<gene>
    <name type="primary">DEFB1</name>
</gene>
<accession>P61263</accession>
<accession>A4H1Z4</accession>
<comment type="function">
    <text evidence="2">Has bactericidal activity. May act as a ligand for C-C chemokine receptor CCR6. Positively regulates the sperm motility and bactericidal activity in a CCR6-dependent manner. Binds to CCR6 and triggers Ca2+ mobilization in the sperm which is important for its motility.</text>
</comment>
<comment type="subunit">
    <text evidence="2">Monomer. Homodimer.</text>
</comment>
<comment type="subcellular location">
    <subcellularLocation>
        <location evidence="2">Secreted</location>
    </subcellularLocation>
    <subcellularLocation>
        <location evidence="2">Membrane</location>
    </subcellularLocation>
    <text evidence="2">Associates with tumor cell membrane-derived microvesicles.</text>
</comment>
<comment type="similarity">
    <text evidence="4">Belongs to the beta-defensin family.</text>
</comment>
<feature type="signal peptide" evidence="3">
    <location>
        <begin position="1"/>
        <end position="21"/>
    </location>
</feature>
<feature type="propeptide" id="PRO_0000006915" evidence="1">
    <location>
        <begin position="22"/>
        <end position="32"/>
    </location>
</feature>
<feature type="peptide" id="PRO_0000006916" description="Beta-defensin 1">
    <location>
        <begin position="33"/>
        <end position="68"/>
    </location>
</feature>
<feature type="disulfide bond" evidence="1">
    <location>
        <begin position="37"/>
        <end position="66"/>
    </location>
</feature>
<feature type="disulfide bond" evidence="1">
    <location>
        <begin position="44"/>
        <end position="59"/>
    </location>
</feature>
<feature type="disulfide bond" evidence="1">
    <location>
        <begin position="49"/>
        <end position="67"/>
    </location>
</feature>
<organism>
    <name type="scientific">Pongo pygmaeus</name>
    <name type="common">Bornean orangutan</name>
    <dbReference type="NCBI Taxonomy" id="9600"/>
    <lineage>
        <taxon>Eukaryota</taxon>
        <taxon>Metazoa</taxon>
        <taxon>Chordata</taxon>
        <taxon>Craniata</taxon>
        <taxon>Vertebrata</taxon>
        <taxon>Euteleostomi</taxon>
        <taxon>Mammalia</taxon>
        <taxon>Eutheria</taxon>
        <taxon>Euarchontoglires</taxon>
        <taxon>Primates</taxon>
        <taxon>Haplorrhini</taxon>
        <taxon>Catarrhini</taxon>
        <taxon>Hominidae</taxon>
        <taxon>Pongo</taxon>
    </lineage>
</organism>
<protein>
    <recommendedName>
        <fullName>Beta-defensin 1</fullName>
        <shortName>BD-1</shortName>
    </recommendedName>
    <alternativeName>
        <fullName>Defensin, beta 1</fullName>
    </alternativeName>
</protein>
<keyword id="KW-0044">Antibiotic</keyword>
<keyword id="KW-0929">Antimicrobial</keyword>
<keyword id="KW-0211">Defensin</keyword>
<keyword id="KW-1015">Disulfide bond</keyword>
<keyword id="KW-0472">Membrane</keyword>
<keyword id="KW-0964">Secreted</keyword>
<keyword id="KW-0732">Signal</keyword>
<dbReference type="EMBL" id="AY033751">
    <property type="protein sequence ID" value="AAK61463.1"/>
    <property type="molecule type" value="Genomic_DNA"/>
</dbReference>
<dbReference type="EMBL" id="AY033736">
    <property type="protein sequence ID" value="AAK61463.1"/>
    <property type="status" value="JOINED"/>
    <property type="molecule type" value="Genomic_DNA"/>
</dbReference>
<dbReference type="EMBL" id="AM410099">
    <property type="protein sequence ID" value="CAL68914.1"/>
    <property type="molecule type" value="Genomic_DNA"/>
</dbReference>
<dbReference type="SMR" id="P61263"/>
<dbReference type="GO" id="GO:0005615">
    <property type="term" value="C:extracellular space"/>
    <property type="evidence" value="ECO:0007669"/>
    <property type="project" value="TreeGrafter"/>
</dbReference>
<dbReference type="GO" id="GO:0016020">
    <property type="term" value="C:membrane"/>
    <property type="evidence" value="ECO:0000250"/>
    <property type="project" value="UniProtKB"/>
</dbReference>
<dbReference type="GO" id="GO:1990742">
    <property type="term" value="C:microvesicle"/>
    <property type="evidence" value="ECO:0000250"/>
    <property type="project" value="UniProtKB"/>
</dbReference>
<dbReference type="GO" id="GO:0097225">
    <property type="term" value="C:sperm midpiece"/>
    <property type="evidence" value="ECO:0000250"/>
    <property type="project" value="UniProtKB"/>
</dbReference>
<dbReference type="GO" id="GO:0031731">
    <property type="term" value="F:CCR6 chemokine receptor binding"/>
    <property type="evidence" value="ECO:0000250"/>
    <property type="project" value="UniProtKB"/>
</dbReference>
<dbReference type="GO" id="GO:0042802">
    <property type="term" value="F:identical protein binding"/>
    <property type="evidence" value="ECO:0000250"/>
    <property type="project" value="UniProtKB"/>
</dbReference>
<dbReference type="GO" id="GO:0019722">
    <property type="term" value="P:calcium-mediated signaling"/>
    <property type="evidence" value="ECO:0000250"/>
    <property type="project" value="UniProtKB"/>
</dbReference>
<dbReference type="GO" id="GO:0050829">
    <property type="term" value="P:defense response to Gram-negative bacterium"/>
    <property type="evidence" value="ECO:0000250"/>
    <property type="project" value="UniProtKB"/>
</dbReference>
<dbReference type="GO" id="GO:0050830">
    <property type="term" value="P:defense response to Gram-positive bacterium"/>
    <property type="evidence" value="ECO:0000250"/>
    <property type="project" value="UniProtKB"/>
</dbReference>
<dbReference type="GO" id="GO:0002227">
    <property type="term" value="P:innate immune response in mucosa"/>
    <property type="evidence" value="ECO:0007669"/>
    <property type="project" value="TreeGrafter"/>
</dbReference>
<dbReference type="GO" id="GO:0060474">
    <property type="term" value="P:positive regulation of flagellated sperm motility involved in capacitation"/>
    <property type="evidence" value="ECO:0000250"/>
    <property type="project" value="UniProtKB"/>
</dbReference>
<dbReference type="FunFam" id="3.10.360.10:FF:000001">
    <property type="entry name" value="Beta-defensin 1"/>
    <property type="match status" value="1"/>
</dbReference>
<dbReference type="Gene3D" id="3.10.360.10">
    <property type="entry name" value="Antimicrobial Peptide, Beta-defensin 2, Chain A"/>
    <property type="match status" value="1"/>
</dbReference>
<dbReference type="InterPro" id="IPR001855">
    <property type="entry name" value="Defensin_beta-like"/>
</dbReference>
<dbReference type="PANTHER" id="PTHR21388:SF9">
    <property type="entry name" value="BETA-DEFENSIN 1"/>
    <property type="match status" value="1"/>
</dbReference>
<dbReference type="PANTHER" id="PTHR21388">
    <property type="entry name" value="BETA-DEFENSIN-RELATED"/>
    <property type="match status" value="1"/>
</dbReference>
<dbReference type="Pfam" id="PF00711">
    <property type="entry name" value="Defensin_beta"/>
    <property type="match status" value="1"/>
</dbReference>
<dbReference type="SUPFAM" id="SSF57392">
    <property type="entry name" value="Defensin-like"/>
    <property type="match status" value="1"/>
</dbReference>
<evidence type="ECO:0000250" key="1"/>
<evidence type="ECO:0000250" key="2">
    <source>
        <dbReference type="UniProtKB" id="P60022"/>
    </source>
</evidence>
<evidence type="ECO:0000255" key="3"/>
<evidence type="ECO:0000305" key="4"/>
<reference key="1">
    <citation type="journal article" date="2002" name="Immunogenetics">
        <title>Beta-defensin 1 gene variability among non-human primates.</title>
        <authorList>
            <person name="Del Pero M."/>
            <person name="Boniotto M."/>
            <person name="Zuccon D."/>
            <person name="Cervella P."/>
            <person name="Spano A."/>
            <person name="Amoroso A."/>
            <person name="Crovella S."/>
        </authorList>
    </citation>
    <scope>NUCLEOTIDE SEQUENCE [GENOMIC DNA]</scope>
</reference>
<reference key="2">
    <citation type="submission" date="2006-11" db="EMBL/GenBank/DDBJ databases">
        <title>Evolution and sequence variation of human beta-defensin genes.</title>
        <authorList>
            <person name="Hollox E.J."/>
            <person name="Armour J.A.L."/>
        </authorList>
    </citation>
    <scope>NUCLEOTIDE SEQUENCE [GENOMIC DNA]</scope>
</reference>
<sequence>MRTSYLLLFTLCLLLSEMASGGNFLTGLGHRSDHYNCVSSGGQCLYSACPIFTKIQGTCYRGKAKCCK</sequence>
<name>DEFB1_PONPY</name>
<proteinExistence type="inferred from homology"/>